<protein>
    <recommendedName>
        <fullName evidence="1">UPF0060 membrane protein YnfA</fullName>
    </recommendedName>
</protein>
<dbReference type="EMBL" id="CP000266">
    <property type="protein sequence ID" value="ABF03740.1"/>
    <property type="status" value="ALT_INIT"/>
    <property type="molecule type" value="Genomic_DNA"/>
</dbReference>
<dbReference type="RefSeq" id="WP_001295395.1">
    <property type="nucleotide sequence ID" value="NC_008258.1"/>
</dbReference>
<dbReference type="SMR" id="Q0T4M5"/>
<dbReference type="KEGG" id="sfv:SFV_1562"/>
<dbReference type="HOGENOM" id="CLU_117653_2_1_6"/>
<dbReference type="Proteomes" id="UP000000659">
    <property type="component" value="Chromosome"/>
</dbReference>
<dbReference type="GO" id="GO:0005886">
    <property type="term" value="C:plasma membrane"/>
    <property type="evidence" value="ECO:0007669"/>
    <property type="project" value="UniProtKB-SubCell"/>
</dbReference>
<dbReference type="HAMAP" id="MF_00010">
    <property type="entry name" value="UPF0060"/>
    <property type="match status" value="1"/>
</dbReference>
<dbReference type="InterPro" id="IPR003844">
    <property type="entry name" value="UPF0060"/>
</dbReference>
<dbReference type="NCBIfam" id="NF002586">
    <property type="entry name" value="PRK02237.1"/>
    <property type="match status" value="1"/>
</dbReference>
<dbReference type="PANTHER" id="PTHR36116">
    <property type="entry name" value="UPF0060 MEMBRANE PROTEIN YNFA"/>
    <property type="match status" value="1"/>
</dbReference>
<dbReference type="PANTHER" id="PTHR36116:SF1">
    <property type="entry name" value="UPF0060 MEMBRANE PROTEIN YNFA"/>
    <property type="match status" value="1"/>
</dbReference>
<dbReference type="Pfam" id="PF02694">
    <property type="entry name" value="UPF0060"/>
    <property type="match status" value="1"/>
</dbReference>
<dbReference type="SUPFAM" id="SSF103481">
    <property type="entry name" value="Multidrug resistance efflux transporter EmrE"/>
    <property type="match status" value="1"/>
</dbReference>
<comment type="subcellular location">
    <subcellularLocation>
        <location evidence="1">Cell inner membrane</location>
        <topology evidence="1">Multi-pass membrane protein</topology>
    </subcellularLocation>
</comment>
<comment type="similarity">
    <text evidence="1">Belongs to the UPF0060 family.</text>
</comment>
<comment type="sequence caution" evidence="2">
    <conflict type="erroneous initiation">
        <sequence resource="EMBL-CDS" id="ABF03740"/>
    </conflict>
</comment>
<sequence>MIKTTLLFFATALCEIIGCFLPWLWLKRNASIWLLLPAGISLALFVWLLTLHPAASGRVYAAYGGVYVCTALMWLRVVDGVKLSLYDWTGALIALCGMLIIVAGWGRT</sequence>
<reference key="1">
    <citation type="journal article" date="2006" name="BMC Genomics">
        <title>Complete genome sequence of Shigella flexneri 5b and comparison with Shigella flexneri 2a.</title>
        <authorList>
            <person name="Nie H."/>
            <person name="Yang F."/>
            <person name="Zhang X."/>
            <person name="Yang J."/>
            <person name="Chen L."/>
            <person name="Wang J."/>
            <person name="Xiong Z."/>
            <person name="Peng J."/>
            <person name="Sun L."/>
            <person name="Dong J."/>
            <person name="Xue Y."/>
            <person name="Xu X."/>
            <person name="Chen S."/>
            <person name="Yao Z."/>
            <person name="Shen Y."/>
            <person name="Jin Q."/>
        </authorList>
    </citation>
    <scope>NUCLEOTIDE SEQUENCE [LARGE SCALE GENOMIC DNA]</scope>
    <source>
        <strain>8401</strain>
    </source>
</reference>
<feature type="chain" id="PRO_0000282266" description="UPF0060 membrane protein YnfA">
    <location>
        <begin position="1"/>
        <end position="108"/>
    </location>
</feature>
<feature type="topological domain" description="Periplasmic" evidence="1">
    <location>
        <begin position="1"/>
        <end position="5"/>
    </location>
</feature>
<feature type="transmembrane region" description="Helical" evidence="1">
    <location>
        <begin position="6"/>
        <end position="26"/>
    </location>
</feature>
<feature type="topological domain" description="Cytoplasmic" evidence="1">
    <location>
        <begin position="27"/>
        <end position="30"/>
    </location>
</feature>
<feature type="transmembrane region" description="Helical" evidence="1">
    <location>
        <begin position="31"/>
        <end position="51"/>
    </location>
</feature>
<feature type="topological domain" description="Periplasmic" evidence="1">
    <location>
        <begin position="52"/>
        <end position="60"/>
    </location>
</feature>
<feature type="transmembrane region" description="Helical" evidence="1">
    <location>
        <begin position="61"/>
        <end position="81"/>
    </location>
</feature>
<feature type="topological domain" description="Cytoplasmic" evidence="1">
    <location>
        <begin position="82"/>
        <end position="84"/>
    </location>
</feature>
<feature type="transmembrane region" description="Helical" evidence="1">
    <location>
        <begin position="85"/>
        <end position="105"/>
    </location>
</feature>
<feature type="topological domain" description="Periplasmic" evidence="1">
    <location>
        <begin position="106"/>
        <end position="108"/>
    </location>
</feature>
<organism>
    <name type="scientific">Shigella flexneri serotype 5b (strain 8401)</name>
    <dbReference type="NCBI Taxonomy" id="373384"/>
    <lineage>
        <taxon>Bacteria</taxon>
        <taxon>Pseudomonadati</taxon>
        <taxon>Pseudomonadota</taxon>
        <taxon>Gammaproteobacteria</taxon>
        <taxon>Enterobacterales</taxon>
        <taxon>Enterobacteriaceae</taxon>
        <taxon>Shigella</taxon>
    </lineage>
</organism>
<accession>Q0T4M5</accession>
<evidence type="ECO:0000255" key="1">
    <source>
        <dbReference type="HAMAP-Rule" id="MF_00010"/>
    </source>
</evidence>
<evidence type="ECO:0000305" key="2"/>
<proteinExistence type="inferred from homology"/>
<name>YNFA_SHIF8</name>
<gene>
    <name evidence="1" type="primary">ynfA</name>
    <name type="ordered locus">SFV_1562</name>
</gene>
<keyword id="KW-0997">Cell inner membrane</keyword>
<keyword id="KW-1003">Cell membrane</keyword>
<keyword id="KW-0472">Membrane</keyword>
<keyword id="KW-0812">Transmembrane</keyword>
<keyword id="KW-1133">Transmembrane helix</keyword>